<reference key="1">
    <citation type="journal article" date="2004" name="Science">
        <title>The Ashbya gossypii genome as a tool for mapping the ancient Saccharomyces cerevisiae genome.</title>
        <authorList>
            <person name="Dietrich F.S."/>
            <person name="Voegeli S."/>
            <person name="Brachat S."/>
            <person name="Lerch A."/>
            <person name="Gates K."/>
            <person name="Steiner S."/>
            <person name="Mohr C."/>
            <person name="Poehlmann R."/>
            <person name="Luedi P."/>
            <person name="Choi S."/>
            <person name="Wing R.A."/>
            <person name="Flavier A."/>
            <person name="Gaffney T.D."/>
            <person name="Philippsen P."/>
        </authorList>
    </citation>
    <scope>NUCLEOTIDE SEQUENCE [LARGE SCALE GENOMIC DNA]</scope>
    <source>
        <strain>ATCC 10895 / CBS 109.51 / FGSC 9923 / NRRL Y-1056</strain>
    </source>
</reference>
<reference key="2">
    <citation type="journal article" date="2013" name="G3 (Bethesda)">
        <title>Genomes of Ashbya fungi isolated from insects reveal four mating-type loci, numerous translocations, lack of transposons, and distinct gene duplications.</title>
        <authorList>
            <person name="Dietrich F.S."/>
            <person name="Voegeli S."/>
            <person name="Kuo S."/>
            <person name="Philippsen P."/>
        </authorList>
    </citation>
    <scope>GENOME REANNOTATION</scope>
    <scope>SEQUENCE REVISION TO C-TERMINUS</scope>
    <source>
        <strain>ATCC 10895 / CBS 109.51 / FGSC 9923 / NRRL Y-1056</strain>
    </source>
</reference>
<evidence type="ECO:0000255" key="1">
    <source>
        <dbReference type="HAMAP-Rule" id="MF_03163"/>
    </source>
</evidence>
<evidence type="ECO:0000256" key="2">
    <source>
        <dbReference type="SAM" id="MobiDB-lite"/>
    </source>
</evidence>
<proteinExistence type="inferred from homology"/>
<name>SPB1_EREGS</name>
<dbReference type="EC" id="2.1.1.-" evidence="1"/>
<dbReference type="EMBL" id="AE016819">
    <property type="protein sequence ID" value="AAS54106.2"/>
    <property type="molecule type" value="Genomic_DNA"/>
</dbReference>
<dbReference type="RefSeq" id="NP_986282.2">
    <property type="nucleotide sequence ID" value="NM_212418.2"/>
</dbReference>
<dbReference type="SMR" id="Q751U1"/>
<dbReference type="FunCoup" id="Q751U1">
    <property type="interactions" value="1213"/>
</dbReference>
<dbReference type="STRING" id="284811.Q751U1"/>
<dbReference type="EnsemblFungi" id="AAS54106">
    <property type="protein sequence ID" value="AAS54106"/>
    <property type="gene ID" value="AGOS_AFR734C"/>
</dbReference>
<dbReference type="GeneID" id="4622573"/>
<dbReference type="KEGG" id="ago:AGOS_AFR734C"/>
<dbReference type="eggNOG" id="KOG1098">
    <property type="taxonomic scope" value="Eukaryota"/>
</dbReference>
<dbReference type="HOGENOM" id="CLU_009422_8_1_1"/>
<dbReference type="InParanoid" id="Q751U1"/>
<dbReference type="OMA" id="QRKDKYY"/>
<dbReference type="OrthoDB" id="1287559at2759"/>
<dbReference type="Proteomes" id="UP000000591">
    <property type="component" value="Chromosome VI"/>
</dbReference>
<dbReference type="GO" id="GO:0005730">
    <property type="term" value="C:nucleolus"/>
    <property type="evidence" value="ECO:0000318"/>
    <property type="project" value="GO_Central"/>
</dbReference>
<dbReference type="GO" id="GO:0030687">
    <property type="term" value="C:preribosome, large subunit precursor"/>
    <property type="evidence" value="ECO:0000318"/>
    <property type="project" value="GO_Central"/>
</dbReference>
<dbReference type="GO" id="GO:0016435">
    <property type="term" value="F:rRNA (guanine) methyltransferase activity"/>
    <property type="evidence" value="ECO:0000318"/>
    <property type="project" value="GO_Central"/>
</dbReference>
<dbReference type="GO" id="GO:0070039">
    <property type="term" value="F:rRNA (guanosine-2'-O-)-methyltransferase activity"/>
    <property type="evidence" value="ECO:0007669"/>
    <property type="project" value="UniProtKB-UniRule"/>
</dbReference>
<dbReference type="GO" id="GO:0008650">
    <property type="term" value="F:rRNA (uridine-2'-O-)-methyltransferase activity"/>
    <property type="evidence" value="ECO:0000318"/>
    <property type="project" value="GO_Central"/>
</dbReference>
<dbReference type="GO" id="GO:0000466">
    <property type="term" value="P:maturation of 5.8S rRNA from tricistronic rRNA transcript (SSU-rRNA, 5.8S rRNA, LSU-rRNA)"/>
    <property type="evidence" value="ECO:0000318"/>
    <property type="project" value="GO_Central"/>
</dbReference>
<dbReference type="GO" id="GO:0000463">
    <property type="term" value="P:maturation of LSU-rRNA from tricistronic rRNA transcript (SSU-rRNA, 5.8S rRNA, LSU-rRNA)"/>
    <property type="evidence" value="ECO:0000318"/>
    <property type="project" value="GO_Central"/>
</dbReference>
<dbReference type="GO" id="GO:0031167">
    <property type="term" value="P:rRNA methylation"/>
    <property type="evidence" value="ECO:0000318"/>
    <property type="project" value="GO_Central"/>
</dbReference>
<dbReference type="FunFam" id="3.40.50.150:FF:000004">
    <property type="entry name" value="AdoMet-dependent rRNA methyltransferase SPB1"/>
    <property type="match status" value="1"/>
</dbReference>
<dbReference type="Gene3D" id="3.40.50.150">
    <property type="entry name" value="Vaccinia Virus protein VP39"/>
    <property type="match status" value="1"/>
</dbReference>
<dbReference type="HAMAP" id="MF_01547">
    <property type="entry name" value="RNA_methyltr_E"/>
    <property type="match status" value="1"/>
</dbReference>
<dbReference type="HAMAP" id="MF_03163">
    <property type="entry name" value="RNA_methyltr_E_SPB1"/>
    <property type="match status" value="1"/>
</dbReference>
<dbReference type="InterPro" id="IPR050082">
    <property type="entry name" value="RNA_methyltr_RlmE"/>
</dbReference>
<dbReference type="InterPro" id="IPR002877">
    <property type="entry name" value="RNA_MeTrfase_FtsJ_dom"/>
</dbReference>
<dbReference type="InterPro" id="IPR015507">
    <property type="entry name" value="rRNA-MeTfrase_E"/>
</dbReference>
<dbReference type="InterPro" id="IPR012920">
    <property type="entry name" value="rRNA_MeTfrase_SPB1-like_C"/>
</dbReference>
<dbReference type="InterPro" id="IPR024576">
    <property type="entry name" value="rRNA_MeTfrase_Spb1_DUF3381"/>
</dbReference>
<dbReference type="InterPro" id="IPR029063">
    <property type="entry name" value="SAM-dependent_MTases_sf"/>
</dbReference>
<dbReference type="InterPro" id="IPR028589">
    <property type="entry name" value="SPB1-like"/>
</dbReference>
<dbReference type="PANTHER" id="PTHR10920:SF13">
    <property type="entry name" value="PRE-RRNA 2'-O-RIBOSE RNA METHYLTRANSFERASE FTSJ3"/>
    <property type="match status" value="1"/>
</dbReference>
<dbReference type="PANTHER" id="PTHR10920">
    <property type="entry name" value="RIBOSOMAL RNA METHYLTRANSFERASE"/>
    <property type="match status" value="1"/>
</dbReference>
<dbReference type="Pfam" id="PF11861">
    <property type="entry name" value="DUF3381"/>
    <property type="match status" value="1"/>
</dbReference>
<dbReference type="Pfam" id="PF01728">
    <property type="entry name" value="FtsJ"/>
    <property type="match status" value="1"/>
</dbReference>
<dbReference type="Pfam" id="PF07780">
    <property type="entry name" value="Spb1_C"/>
    <property type="match status" value="1"/>
</dbReference>
<dbReference type="SUPFAM" id="SSF53335">
    <property type="entry name" value="S-adenosyl-L-methionine-dependent methyltransferases"/>
    <property type="match status" value="1"/>
</dbReference>
<sequence length="830" mass="94998">MGRTQKKNSKGRLDRYYYLAKEKGYRARSSFKIIQINEKFGHFLEKSKVVIDLCAAPGSWCQVASNLCPVNSLIIGVDIVPMQPMPNVITFQSDITTEDCRSKLRGYMKTWKADTVLHDGAPNVGLNWVQDAFTQSHLTLQALKLAVENLVVGGTFVTKIFRSKDYNKLMWVFQQLFDKVEATKPPASRNVSAEIFVVCKGFKAPKKLDPRLLDPKEVFEELPDGPQNMQAKVYNPEKKTRKRDGYEEGDYLLYHTVPIMDFVKVEDPIQMLGTTNKFTLDKDDHEWKIVKKLKQTTPEFKACIEDLKVLGKKDFKMLLRWRKAARELLGLDKDEEQPEIETVPLTEEEQIEKELQEMQQKQNLKKKREKRKQNEIKQKEITRMQMQMITPTDLGIEAASIGRDSLFNLKTAEKTGILDDLARGKKRMVFTRDELAEDNEIQIDENAPLSDRDDLADADELESQLDAMYHQFKARRIERDAHFKAKEARGGDDDAWNGFDEVASDEEPEESKKDYVDDDDSDVSDSDSDEAINQLIAKIKGETGDKKLSAKARALFNDSIFDGVEADLPSEEPQAPASSEQGSKKRRLEEVSEESSSDEEEAEEESDSDFEIVRNEKDESDDDYDSEDEAERSQKEKHAREVDIATVEAMTLAHQLALGQRSKHDIVDEGFNRYSFRDRDNLPEWFLEDEKMHSKINKPITKEAAMAIKEKLKALNARPIKKVAEAKARKKMRALNRLEKLKKKAGLINDDSDKSEKDKAEEIAKLMKKVTKKAKLKPKVTLVVAKGKNRGLSGRPKGIKGKYKMVDGVMKNEQRALKRIAKKHRKKSKH</sequence>
<keyword id="KW-0175">Coiled coil</keyword>
<keyword id="KW-0489">Methyltransferase</keyword>
<keyword id="KW-0539">Nucleus</keyword>
<keyword id="KW-1185">Reference proteome</keyword>
<keyword id="KW-0690">Ribosome biogenesis</keyword>
<keyword id="KW-0698">rRNA processing</keyword>
<keyword id="KW-0949">S-adenosyl-L-methionine</keyword>
<keyword id="KW-0808">Transferase</keyword>
<gene>
    <name evidence="1" type="primary">SPB1</name>
    <name type="ordered locus">AFR734C</name>
</gene>
<accession>Q751U1</accession>
<protein>
    <recommendedName>
        <fullName evidence="1">AdoMet-dependent rRNA methyltransferase SPB1</fullName>
        <ecNumber evidence="1">2.1.1.-</ecNumber>
    </recommendedName>
    <alternativeName>
        <fullName evidence="1">2'-O-ribose RNA methyltransferase</fullName>
    </alternativeName>
    <alternativeName>
        <fullName evidence="1">S-adenosyl-L-methionine-dependent methyltransferase</fullName>
    </alternativeName>
</protein>
<feature type="chain" id="PRO_0000155591" description="AdoMet-dependent rRNA methyltransferase SPB1">
    <location>
        <begin position="1"/>
        <end position="830"/>
    </location>
</feature>
<feature type="region of interest" description="Disordered" evidence="2">
    <location>
        <begin position="485"/>
        <end position="529"/>
    </location>
</feature>
<feature type="region of interest" description="Disordered" evidence="2">
    <location>
        <begin position="565"/>
        <end position="642"/>
    </location>
</feature>
<feature type="coiled-coil region" evidence="1">
    <location>
        <begin position="345"/>
        <end position="388"/>
    </location>
</feature>
<feature type="compositionally biased region" description="Acidic residues" evidence="2">
    <location>
        <begin position="516"/>
        <end position="529"/>
    </location>
</feature>
<feature type="compositionally biased region" description="Acidic residues" evidence="2">
    <location>
        <begin position="591"/>
        <end position="610"/>
    </location>
</feature>
<feature type="compositionally biased region" description="Acidic residues" evidence="2">
    <location>
        <begin position="618"/>
        <end position="630"/>
    </location>
</feature>
<feature type="compositionally biased region" description="Basic and acidic residues" evidence="2">
    <location>
        <begin position="631"/>
        <end position="642"/>
    </location>
</feature>
<feature type="active site" description="Proton acceptor" evidence="1">
    <location>
        <position position="159"/>
    </location>
</feature>
<feature type="binding site" evidence="1">
    <location>
        <position position="58"/>
    </location>
    <ligand>
        <name>S-adenosyl-L-methionine</name>
        <dbReference type="ChEBI" id="CHEBI:59789"/>
    </ligand>
</feature>
<feature type="binding site" evidence="1">
    <location>
        <position position="60"/>
    </location>
    <ligand>
        <name>S-adenosyl-L-methionine</name>
        <dbReference type="ChEBI" id="CHEBI:59789"/>
    </ligand>
</feature>
<feature type="binding site" evidence="1">
    <location>
        <position position="78"/>
    </location>
    <ligand>
        <name>S-adenosyl-L-methionine</name>
        <dbReference type="ChEBI" id="CHEBI:59789"/>
    </ligand>
</feature>
<feature type="binding site" evidence="1">
    <location>
        <position position="94"/>
    </location>
    <ligand>
        <name>S-adenosyl-L-methionine</name>
        <dbReference type="ChEBI" id="CHEBI:59789"/>
    </ligand>
</feature>
<feature type="binding site" evidence="1">
    <location>
        <position position="119"/>
    </location>
    <ligand>
        <name>S-adenosyl-L-methionine</name>
        <dbReference type="ChEBI" id="CHEBI:59789"/>
    </ligand>
</feature>
<comment type="function">
    <text evidence="1">Required for proper assembly of pre-ribosomal particles during the biogenesis of the 60S ribosomal subunit.</text>
</comment>
<comment type="catalytic activity">
    <reaction evidence="1">
        <text>a ribonucleotide in rRNA + S-adenosyl-L-methionine = a 2'-O-methylribonucleotide in rRNA + S-adenosyl-L-homocysteine + H(+)</text>
        <dbReference type="Rhea" id="RHEA:48628"/>
        <dbReference type="Rhea" id="RHEA-COMP:12164"/>
        <dbReference type="Rhea" id="RHEA-COMP:12165"/>
        <dbReference type="ChEBI" id="CHEBI:15378"/>
        <dbReference type="ChEBI" id="CHEBI:57856"/>
        <dbReference type="ChEBI" id="CHEBI:59789"/>
        <dbReference type="ChEBI" id="CHEBI:90675"/>
        <dbReference type="ChEBI" id="CHEBI:90676"/>
    </reaction>
</comment>
<comment type="subunit">
    <text evidence="1">Component of the nucleolar and nucleoplasmic pre-60S ribosomal particle.</text>
</comment>
<comment type="subcellular location">
    <subcellularLocation>
        <location evidence="1">Nucleus</location>
        <location evidence="1">Nucleolus</location>
    </subcellularLocation>
</comment>
<comment type="similarity">
    <text evidence="1">Belongs to the class I-like SAM-binding methyltransferase superfamily. RNA methyltransferase RlmE family. SPB1 subfamily.</text>
</comment>
<organism>
    <name type="scientific">Eremothecium gossypii (strain ATCC 10895 / CBS 109.51 / FGSC 9923 / NRRL Y-1056)</name>
    <name type="common">Yeast</name>
    <name type="synonym">Ashbya gossypii</name>
    <dbReference type="NCBI Taxonomy" id="284811"/>
    <lineage>
        <taxon>Eukaryota</taxon>
        <taxon>Fungi</taxon>
        <taxon>Dikarya</taxon>
        <taxon>Ascomycota</taxon>
        <taxon>Saccharomycotina</taxon>
        <taxon>Saccharomycetes</taxon>
        <taxon>Saccharomycetales</taxon>
        <taxon>Saccharomycetaceae</taxon>
        <taxon>Eremothecium</taxon>
    </lineage>
</organism>